<comment type="function">
    <text evidence="1">Involved in the binding of tRNA to the ribosomes.</text>
</comment>
<comment type="subunit">
    <text evidence="1">Part of the 30S ribosomal subunit.</text>
</comment>
<comment type="subcellular location">
    <subcellularLocation>
        <location evidence="1">Plastid</location>
        <location evidence="1">Chloroplast</location>
    </subcellularLocation>
</comment>
<comment type="similarity">
    <text evidence="1">Belongs to the universal ribosomal protein uS10 family.</text>
</comment>
<proteinExistence type="inferred from homology"/>
<accession>P19460</accession>
<accession>O46918</accession>
<protein>
    <recommendedName>
        <fullName evidence="1">Small ribosomal subunit protein uS10c</fullName>
    </recommendedName>
    <alternativeName>
        <fullName evidence="2">30S ribosomal protein S10, chloroplastic</fullName>
    </alternativeName>
</protein>
<dbReference type="EMBL" id="AF041468">
    <property type="protein sequence ID" value="AAC35731.1"/>
    <property type="molecule type" value="Genomic_DNA"/>
</dbReference>
<dbReference type="RefSeq" id="NP_050797.1">
    <property type="nucleotide sequence ID" value="NC_000926.1"/>
</dbReference>
<dbReference type="SMR" id="P19460"/>
<dbReference type="GeneID" id="857105"/>
<dbReference type="HOGENOM" id="CLU_122625_1_3_1"/>
<dbReference type="OMA" id="SFEVNHM"/>
<dbReference type="GO" id="GO:0009507">
    <property type="term" value="C:chloroplast"/>
    <property type="evidence" value="ECO:0007669"/>
    <property type="project" value="UniProtKB-SubCell"/>
</dbReference>
<dbReference type="GO" id="GO:1990904">
    <property type="term" value="C:ribonucleoprotein complex"/>
    <property type="evidence" value="ECO:0007669"/>
    <property type="project" value="UniProtKB-KW"/>
</dbReference>
<dbReference type="GO" id="GO:0005840">
    <property type="term" value="C:ribosome"/>
    <property type="evidence" value="ECO:0007669"/>
    <property type="project" value="UniProtKB-KW"/>
</dbReference>
<dbReference type="GO" id="GO:0003735">
    <property type="term" value="F:structural constituent of ribosome"/>
    <property type="evidence" value="ECO:0007669"/>
    <property type="project" value="InterPro"/>
</dbReference>
<dbReference type="GO" id="GO:0000049">
    <property type="term" value="F:tRNA binding"/>
    <property type="evidence" value="ECO:0007669"/>
    <property type="project" value="UniProtKB-UniRule"/>
</dbReference>
<dbReference type="GO" id="GO:0006412">
    <property type="term" value="P:translation"/>
    <property type="evidence" value="ECO:0007669"/>
    <property type="project" value="UniProtKB-UniRule"/>
</dbReference>
<dbReference type="FunFam" id="3.30.70.600:FF:000003">
    <property type="entry name" value="30S ribosomal protein S10"/>
    <property type="match status" value="1"/>
</dbReference>
<dbReference type="Gene3D" id="3.30.70.600">
    <property type="entry name" value="Ribosomal protein S10 domain"/>
    <property type="match status" value="1"/>
</dbReference>
<dbReference type="HAMAP" id="MF_00508">
    <property type="entry name" value="Ribosomal_uS10"/>
    <property type="match status" value="1"/>
</dbReference>
<dbReference type="InterPro" id="IPR001848">
    <property type="entry name" value="Ribosomal_uS10"/>
</dbReference>
<dbReference type="InterPro" id="IPR018268">
    <property type="entry name" value="Ribosomal_uS10_CS"/>
</dbReference>
<dbReference type="InterPro" id="IPR027486">
    <property type="entry name" value="Ribosomal_uS10_dom"/>
</dbReference>
<dbReference type="InterPro" id="IPR036838">
    <property type="entry name" value="Ribosomal_uS10_dom_sf"/>
</dbReference>
<dbReference type="NCBIfam" id="NF001861">
    <property type="entry name" value="PRK00596.1"/>
    <property type="match status" value="1"/>
</dbReference>
<dbReference type="NCBIfam" id="TIGR01049">
    <property type="entry name" value="rpsJ_bact"/>
    <property type="match status" value="1"/>
</dbReference>
<dbReference type="PANTHER" id="PTHR11700">
    <property type="entry name" value="30S RIBOSOMAL PROTEIN S10 FAMILY MEMBER"/>
    <property type="match status" value="1"/>
</dbReference>
<dbReference type="Pfam" id="PF00338">
    <property type="entry name" value="Ribosomal_S10"/>
    <property type="match status" value="1"/>
</dbReference>
<dbReference type="PRINTS" id="PR00971">
    <property type="entry name" value="RIBOSOMALS10"/>
</dbReference>
<dbReference type="SMART" id="SM01403">
    <property type="entry name" value="Ribosomal_S10"/>
    <property type="match status" value="1"/>
</dbReference>
<dbReference type="SUPFAM" id="SSF54999">
    <property type="entry name" value="Ribosomal protein S10"/>
    <property type="match status" value="1"/>
</dbReference>
<dbReference type="PROSITE" id="PS00361">
    <property type="entry name" value="RIBOSOMAL_S10"/>
    <property type="match status" value="1"/>
</dbReference>
<keyword id="KW-0150">Chloroplast</keyword>
<keyword id="KW-0934">Plastid</keyword>
<keyword id="KW-0687">Ribonucleoprotein</keyword>
<keyword id="KW-0689">Ribosomal protein</keyword>
<name>RR10_GUITH</name>
<feature type="chain" id="PRO_0000146667" description="Small ribosomal subunit protein uS10c">
    <location>
        <begin position="1"/>
        <end position="102"/>
    </location>
</feature>
<feature type="sequence conflict" description="In Ref. 1." evidence="2" ref="1">
    <original>K</original>
    <variation>Q</variation>
    <location>
        <position position="89"/>
    </location>
</feature>
<sequence>MQKQKIRIRLKGYETNLLLDSCNKIIETATRTNSVTAGPIPLPTRRKIYCVLRSPHVNKDSREHFETRIHKRVIDIYEPNSTTIDSLMKLDLPAGIDIDIKI</sequence>
<gene>
    <name evidence="1" type="primary">rps10</name>
</gene>
<evidence type="ECO:0000255" key="1">
    <source>
        <dbReference type="HAMAP-Rule" id="MF_00508"/>
    </source>
</evidence>
<evidence type="ECO:0000305" key="2"/>
<organism>
    <name type="scientific">Guillardia theta</name>
    <name type="common">Cryptophyte</name>
    <name type="synonym">Cryptomonas phi</name>
    <dbReference type="NCBI Taxonomy" id="55529"/>
    <lineage>
        <taxon>Eukaryota</taxon>
        <taxon>Cryptophyceae</taxon>
        <taxon>Pyrenomonadales</taxon>
        <taxon>Geminigeraceae</taxon>
        <taxon>Guillardia</taxon>
    </lineage>
</organism>
<geneLocation type="chloroplast"/>
<reference key="1">
    <citation type="journal article" date="1991" name="Curr. Genet.">
        <title>Unusual organization of a ribosomal protein operon in the plastid genome of Cryptomonas phi: evolutionary considerations.</title>
        <authorList>
            <person name="Douglas S.E."/>
        </authorList>
    </citation>
    <scope>NUCLEOTIDE SEQUENCE [GENOMIC DNA]</scope>
</reference>
<reference key="2">
    <citation type="journal article" date="1997" name="Biochem. Mol. Biol. Int.">
        <title>The large ribosomal protein gene cluster of a cryptomonad plastid: gene organization, sequence and evolutionary implications.</title>
        <authorList>
            <person name="Wang S.L."/>
            <person name="Liu X.-Q."/>
            <person name="Douglas S.E."/>
        </authorList>
    </citation>
    <scope>NUCLEOTIDE SEQUENCE [GENOMIC DNA]</scope>
</reference>